<gene>
    <name type="primary">sbcD</name>
    <name type="ordered locus">SE_1028</name>
</gene>
<keyword id="KW-0233">DNA recombination</keyword>
<keyword id="KW-0235">DNA replication</keyword>
<keyword id="KW-0255">Endonuclease</keyword>
<keyword id="KW-0269">Exonuclease</keyword>
<keyword id="KW-0378">Hydrolase</keyword>
<keyword id="KW-0540">Nuclease</keyword>
<sequence length="374" mass="43553">MKIVHTADWHLGKILNGKQLLEDQKYILTQFKQHMEKEQPDLIVIAGDLYDTSYPSKEAIGLLEETIEYLNIELKIPIIMISGNHDGRERLNYGSKWFENNQLYIRTQLENIDDPIELSGVQFFTLPFATVSEVQNYFKDKQIETYQQALNECLEQMSSSIDNNKVNILIGHLTIEGGKTSDSERPLTIGTVESVDMHSFRLFDYVMLGHLHHPFSINNSFIKYSGSILQYSFSEVNQSKGYRVLDIENNQLLNETFVPLKPLRELEVIEGDYEDIIQERIKVKNKNNYFHFKLTNVSHITDPMMKLKQIYPNILALSNVVFDHSENFSHVEIKKQDDQTIIENFYKNMTDQHLSQVQSDKIKHLLSFILDREG</sequence>
<proteinExistence type="inferred from homology"/>
<comment type="function">
    <text evidence="1">SbcCD cleaves DNA hairpin structures. These structures can inhibit DNA replication and are intermediates in certain DNA recombination reactions. The complex acts as a 3'-&gt;5' double strand exonuclease that can open hairpins. It also has a 5' single-strand endonuclease activity (By similarity).</text>
</comment>
<comment type="subunit">
    <text evidence="1">Heterodimer of SbcC and SbcD.</text>
</comment>
<comment type="similarity">
    <text evidence="2">Belongs to the SbcD family.</text>
</comment>
<reference key="1">
    <citation type="journal article" date="2003" name="Mol. Microbiol.">
        <title>Genome-based analysis of virulence genes in a non-biofilm-forming Staphylococcus epidermidis strain (ATCC 12228).</title>
        <authorList>
            <person name="Zhang Y.-Q."/>
            <person name="Ren S.-X."/>
            <person name="Li H.-L."/>
            <person name="Wang Y.-X."/>
            <person name="Fu G."/>
            <person name="Yang J."/>
            <person name="Qin Z.-Q."/>
            <person name="Miao Y.-G."/>
            <person name="Wang W.-Y."/>
            <person name="Chen R.-S."/>
            <person name="Shen Y."/>
            <person name="Chen Z."/>
            <person name="Yuan Z.-H."/>
            <person name="Zhao G.-P."/>
            <person name="Qu D."/>
            <person name="Danchin A."/>
            <person name="Wen Y.-M."/>
        </authorList>
    </citation>
    <scope>NUCLEOTIDE SEQUENCE [LARGE SCALE GENOMIC DNA]</scope>
    <source>
        <strain>ATCC 12228 / FDA PCI 1200</strain>
    </source>
</reference>
<organism>
    <name type="scientific">Staphylococcus epidermidis (strain ATCC 12228 / FDA PCI 1200)</name>
    <dbReference type="NCBI Taxonomy" id="176280"/>
    <lineage>
        <taxon>Bacteria</taxon>
        <taxon>Bacillati</taxon>
        <taxon>Bacillota</taxon>
        <taxon>Bacilli</taxon>
        <taxon>Bacillales</taxon>
        <taxon>Staphylococcaceae</taxon>
        <taxon>Staphylococcus</taxon>
    </lineage>
</organism>
<feature type="chain" id="PRO_0000338492" description="Nuclease SbcCD subunit D">
    <location>
        <begin position="1"/>
        <end position="374"/>
    </location>
</feature>
<accession>Q8CPC6</accession>
<dbReference type="EMBL" id="AE015929">
    <property type="protein sequence ID" value="AAO04625.1"/>
    <property type="molecule type" value="Genomic_DNA"/>
</dbReference>
<dbReference type="RefSeq" id="NP_764583.1">
    <property type="nucleotide sequence ID" value="NC_004461.1"/>
</dbReference>
<dbReference type="RefSeq" id="WP_001830960.1">
    <property type="nucleotide sequence ID" value="NZ_WBME01000057.1"/>
</dbReference>
<dbReference type="SMR" id="Q8CPC6"/>
<dbReference type="DNASU" id="1057663"/>
<dbReference type="GeneID" id="50018845"/>
<dbReference type="KEGG" id="sep:SE_1028"/>
<dbReference type="PATRIC" id="fig|176280.10.peg.1003"/>
<dbReference type="eggNOG" id="COG0420">
    <property type="taxonomic scope" value="Bacteria"/>
</dbReference>
<dbReference type="HOGENOM" id="CLU_038045_0_1_9"/>
<dbReference type="OrthoDB" id="9773856at2"/>
<dbReference type="Proteomes" id="UP000001411">
    <property type="component" value="Chromosome"/>
</dbReference>
<dbReference type="GO" id="GO:0008408">
    <property type="term" value="F:3'-5' exonuclease activity"/>
    <property type="evidence" value="ECO:0007669"/>
    <property type="project" value="InterPro"/>
</dbReference>
<dbReference type="GO" id="GO:0004519">
    <property type="term" value="F:endonuclease activity"/>
    <property type="evidence" value="ECO:0007669"/>
    <property type="project" value="UniProtKB-KW"/>
</dbReference>
<dbReference type="GO" id="GO:0006310">
    <property type="term" value="P:DNA recombination"/>
    <property type="evidence" value="ECO:0007669"/>
    <property type="project" value="UniProtKB-KW"/>
</dbReference>
<dbReference type="GO" id="GO:0006260">
    <property type="term" value="P:DNA replication"/>
    <property type="evidence" value="ECO:0007669"/>
    <property type="project" value="UniProtKB-KW"/>
</dbReference>
<dbReference type="CDD" id="cd00840">
    <property type="entry name" value="MPP_Mre11_N"/>
    <property type="match status" value="1"/>
</dbReference>
<dbReference type="Gene3D" id="3.60.21.10">
    <property type="match status" value="1"/>
</dbReference>
<dbReference type="InterPro" id="IPR004843">
    <property type="entry name" value="Calcineurin-like_PHP_ApaH"/>
</dbReference>
<dbReference type="InterPro" id="IPR050535">
    <property type="entry name" value="DNA_Repair-Maintenance_Comp"/>
</dbReference>
<dbReference type="InterPro" id="IPR029052">
    <property type="entry name" value="Metallo-depent_PP-like"/>
</dbReference>
<dbReference type="InterPro" id="IPR041796">
    <property type="entry name" value="Mre11_N"/>
</dbReference>
<dbReference type="InterPro" id="IPR053381">
    <property type="entry name" value="SbcCD_nuclease"/>
</dbReference>
<dbReference type="InterPro" id="IPR004593">
    <property type="entry name" value="SbcD"/>
</dbReference>
<dbReference type="InterPro" id="IPR026843">
    <property type="entry name" value="SbcD_C"/>
</dbReference>
<dbReference type="NCBIfam" id="TIGR00619">
    <property type="entry name" value="sbcd"/>
    <property type="match status" value="1"/>
</dbReference>
<dbReference type="NCBIfam" id="NF041753">
    <property type="entry name" value="sbcd_Staph"/>
    <property type="match status" value="1"/>
</dbReference>
<dbReference type="PANTHER" id="PTHR30337">
    <property type="entry name" value="COMPONENT OF ATP-DEPENDENT DSDNA EXONUCLEASE"/>
    <property type="match status" value="1"/>
</dbReference>
<dbReference type="PANTHER" id="PTHR30337:SF0">
    <property type="entry name" value="NUCLEASE SBCCD SUBUNIT D"/>
    <property type="match status" value="1"/>
</dbReference>
<dbReference type="Pfam" id="PF00149">
    <property type="entry name" value="Metallophos"/>
    <property type="match status" value="1"/>
</dbReference>
<dbReference type="Pfam" id="PF12320">
    <property type="entry name" value="SbcD_C"/>
    <property type="match status" value="1"/>
</dbReference>
<dbReference type="SUPFAM" id="SSF56300">
    <property type="entry name" value="Metallo-dependent phosphatases"/>
    <property type="match status" value="1"/>
</dbReference>
<evidence type="ECO:0000250" key="1"/>
<evidence type="ECO:0000305" key="2"/>
<name>SBCD_STAES</name>
<protein>
    <recommendedName>
        <fullName>Nuclease SbcCD subunit D</fullName>
    </recommendedName>
</protein>